<proteinExistence type="inferred from homology"/>
<gene>
    <name evidence="1" type="primary">tig</name>
    <name type="ordered locus">Pnap_2958</name>
</gene>
<dbReference type="EC" id="5.2.1.8" evidence="1"/>
<dbReference type="EMBL" id="CP000529">
    <property type="protein sequence ID" value="ABM38257.1"/>
    <property type="molecule type" value="Genomic_DNA"/>
</dbReference>
<dbReference type="RefSeq" id="WP_011802331.1">
    <property type="nucleotide sequence ID" value="NC_008781.1"/>
</dbReference>
<dbReference type="SMR" id="A1VRH9"/>
<dbReference type="STRING" id="365044.Pnap_2958"/>
<dbReference type="KEGG" id="pna:Pnap_2958"/>
<dbReference type="eggNOG" id="COG0544">
    <property type="taxonomic scope" value="Bacteria"/>
</dbReference>
<dbReference type="HOGENOM" id="CLU_033058_2_0_4"/>
<dbReference type="OrthoDB" id="9767721at2"/>
<dbReference type="Proteomes" id="UP000000644">
    <property type="component" value="Chromosome"/>
</dbReference>
<dbReference type="GO" id="GO:0005737">
    <property type="term" value="C:cytoplasm"/>
    <property type="evidence" value="ECO:0007669"/>
    <property type="project" value="UniProtKB-SubCell"/>
</dbReference>
<dbReference type="GO" id="GO:0003755">
    <property type="term" value="F:peptidyl-prolyl cis-trans isomerase activity"/>
    <property type="evidence" value="ECO:0007669"/>
    <property type="project" value="UniProtKB-UniRule"/>
</dbReference>
<dbReference type="GO" id="GO:0044183">
    <property type="term" value="F:protein folding chaperone"/>
    <property type="evidence" value="ECO:0007669"/>
    <property type="project" value="TreeGrafter"/>
</dbReference>
<dbReference type="GO" id="GO:0043022">
    <property type="term" value="F:ribosome binding"/>
    <property type="evidence" value="ECO:0007669"/>
    <property type="project" value="TreeGrafter"/>
</dbReference>
<dbReference type="GO" id="GO:0051083">
    <property type="term" value="P:'de novo' cotranslational protein folding"/>
    <property type="evidence" value="ECO:0007669"/>
    <property type="project" value="TreeGrafter"/>
</dbReference>
<dbReference type="GO" id="GO:0051301">
    <property type="term" value="P:cell division"/>
    <property type="evidence" value="ECO:0007669"/>
    <property type="project" value="UniProtKB-KW"/>
</dbReference>
<dbReference type="GO" id="GO:0061077">
    <property type="term" value="P:chaperone-mediated protein folding"/>
    <property type="evidence" value="ECO:0007669"/>
    <property type="project" value="TreeGrafter"/>
</dbReference>
<dbReference type="GO" id="GO:0015031">
    <property type="term" value="P:protein transport"/>
    <property type="evidence" value="ECO:0007669"/>
    <property type="project" value="UniProtKB-UniRule"/>
</dbReference>
<dbReference type="GO" id="GO:0043335">
    <property type="term" value="P:protein unfolding"/>
    <property type="evidence" value="ECO:0007669"/>
    <property type="project" value="TreeGrafter"/>
</dbReference>
<dbReference type="FunFam" id="3.10.50.40:FF:000001">
    <property type="entry name" value="Trigger factor"/>
    <property type="match status" value="1"/>
</dbReference>
<dbReference type="Gene3D" id="3.10.50.40">
    <property type="match status" value="1"/>
</dbReference>
<dbReference type="Gene3D" id="3.30.70.1050">
    <property type="entry name" value="Trigger factor ribosome-binding domain"/>
    <property type="match status" value="1"/>
</dbReference>
<dbReference type="Gene3D" id="1.10.3120.10">
    <property type="entry name" value="Trigger factor, C-terminal domain"/>
    <property type="match status" value="1"/>
</dbReference>
<dbReference type="HAMAP" id="MF_00303">
    <property type="entry name" value="Trigger_factor_Tig"/>
    <property type="match status" value="1"/>
</dbReference>
<dbReference type="InterPro" id="IPR046357">
    <property type="entry name" value="PPIase_dom_sf"/>
</dbReference>
<dbReference type="InterPro" id="IPR001179">
    <property type="entry name" value="PPIase_FKBP_dom"/>
</dbReference>
<dbReference type="InterPro" id="IPR005215">
    <property type="entry name" value="Trig_fac"/>
</dbReference>
<dbReference type="InterPro" id="IPR008880">
    <property type="entry name" value="Trigger_fac_C"/>
</dbReference>
<dbReference type="InterPro" id="IPR037041">
    <property type="entry name" value="Trigger_fac_C_sf"/>
</dbReference>
<dbReference type="InterPro" id="IPR008881">
    <property type="entry name" value="Trigger_fac_ribosome-bd_bac"/>
</dbReference>
<dbReference type="InterPro" id="IPR036611">
    <property type="entry name" value="Trigger_fac_ribosome-bd_sf"/>
</dbReference>
<dbReference type="InterPro" id="IPR027304">
    <property type="entry name" value="Trigger_fact/SurA_dom_sf"/>
</dbReference>
<dbReference type="NCBIfam" id="TIGR00115">
    <property type="entry name" value="tig"/>
    <property type="match status" value="1"/>
</dbReference>
<dbReference type="PANTHER" id="PTHR30560">
    <property type="entry name" value="TRIGGER FACTOR CHAPERONE AND PEPTIDYL-PROLYL CIS/TRANS ISOMERASE"/>
    <property type="match status" value="1"/>
</dbReference>
<dbReference type="PANTHER" id="PTHR30560:SF3">
    <property type="entry name" value="TRIGGER FACTOR-LIKE PROTEIN TIG, CHLOROPLASTIC"/>
    <property type="match status" value="1"/>
</dbReference>
<dbReference type="Pfam" id="PF00254">
    <property type="entry name" value="FKBP_C"/>
    <property type="match status" value="1"/>
</dbReference>
<dbReference type="Pfam" id="PF05698">
    <property type="entry name" value="Trigger_C"/>
    <property type="match status" value="1"/>
</dbReference>
<dbReference type="Pfam" id="PF05697">
    <property type="entry name" value="Trigger_N"/>
    <property type="match status" value="1"/>
</dbReference>
<dbReference type="PIRSF" id="PIRSF003095">
    <property type="entry name" value="Trigger_factor"/>
    <property type="match status" value="1"/>
</dbReference>
<dbReference type="SUPFAM" id="SSF54534">
    <property type="entry name" value="FKBP-like"/>
    <property type="match status" value="1"/>
</dbReference>
<dbReference type="SUPFAM" id="SSF109998">
    <property type="entry name" value="Triger factor/SurA peptide-binding domain-like"/>
    <property type="match status" value="1"/>
</dbReference>
<dbReference type="SUPFAM" id="SSF102735">
    <property type="entry name" value="Trigger factor ribosome-binding domain"/>
    <property type="match status" value="1"/>
</dbReference>
<dbReference type="PROSITE" id="PS50059">
    <property type="entry name" value="FKBP_PPIASE"/>
    <property type="match status" value="1"/>
</dbReference>
<sequence>MAVTVENLEKLERKMTLTLPLNTIQSEVATRLKKLARTVKMDGFRPGKVPMSVVSQRYAYSVHYEVMNDKVGEAFAVAANEAKLRVAGQPRISEKEDAPEGELAFDAIFEVYPDVKIADLANAEVEKLSAEVSDAAIDKTLDILRKQRRTFALRAADEPAQDGDRVTIDFEGKMDGETFAGGKAEDFQFIVGDGQMLKEFEDAVRGMKSGESKTFPLNFPADYHGKDVAGKQADFLVTVKKIEAAHLPEVNEELAKSLGIADATVEGLRSDIKKNLEREVKFRLLARNKNAVMDALVTNAELDLPNASVQAELERLIENARADLKQRGIKDADKAPIPEELFRPQAEKRVRLGLVVAELVRANELQAKPEQLKSHIEELAASYEKPQEVVRWYLSDNSRMAEVEAVVIENNVTDFVLGKAKVSEKAISFDELMGQN</sequence>
<accession>A1VRH9</accession>
<reference key="1">
    <citation type="journal article" date="2009" name="Environ. Microbiol.">
        <title>The genome of Polaromonas naphthalenivorans strain CJ2, isolated from coal tar-contaminated sediment, reveals physiological and metabolic versatility and evolution through extensive horizontal gene transfer.</title>
        <authorList>
            <person name="Yagi J.M."/>
            <person name="Sims D."/>
            <person name="Brettin T."/>
            <person name="Bruce D."/>
            <person name="Madsen E.L."/>
        </authorList>
    </citation>
    <scope>NUCLEOTIDE SEQUENCE [LARGE SCALE GENOMIC DNA]</scope>
    <source>
        <strain>CJ2</strain>
    </source>
</reference>
<name>TIG_POLNA</name>
<comment type="function">
    <text evidence="1">Involved in protein export. Acts as a chaperone by maintaining the newly synthesized protein in an open conformation. Functions as a peptidyl-prolyl cis-trans isomerase.</text>
</comment>
<comment type="catalytic activity">
    <reaction evidence="1">
        <text>[protein]-peptidylproline (omega=180) = [protein]-peptidylproline (omega=0)</text>
        <dbReference type="Rhea" id="RHEA:16237"/>
        <dbReference type="Rhea" id="RHEA-COMP:10747"/>
        <dbReference type="Rhea" id="RHEA-COMP:10748"/>
        <dbReference type="ChEBI" id="CHEBI:83833"/>
        <dbReference type="ChEBI" id="CHEBI:83834"/>
        <dbReference type="EC" id="5.2.1.8"/>
    </reaction>
</comment>
<comment type="subcellular location">
    <subcellularLocation>
        <location>Cytoplasm</location>
    </subcellularLocation>
    <text evidence="1">About half TF is bound to the ribosome near the polypeptide exit tunnel while the other half is free in the cytoplasm.</text>
</comment>
<comment type="domain">
    <text evidence="1">Consists of 3 domains; the N-terminus binds the ribosome, the middle domain has PPIase activity, while the C-terminus has intrinsic chaperone activity on its own.</text>
</comment>
<comment type="similarity">
    <text evidence="1">Belongs to the FKBP-type PPIase family. Tig subfamily.</text>
</comment>
<keyword id="KW-0131">Cell cycle</keyword>
<keyword id="KW-0132">Cell division</keyword>
<keyword id="KW-0143">Chaperone</keyword>
<keyword id="KW-0963">Cytoplasm</keyword>
<keyword id="KW-0413">Isomerase</keyword>
<keyword id="KW-1185">Reference proteome</keyword>
<keyword id="KW-0697">Rotamase</keyword>
<feature type="chain" id="PRO_1000022725" description="Trigger factor">
    <location>
        <begin position="1"/>
        <end position="436"/>
    </location>
</feature>
<feature type="domain" description="PPIase FKBP-type" evidence="1">
    <location>
        <begin position="163"/>
        <end position="248"/>
    </location>
</feature>
<organism>
    <name type="scientific">Polaromonas naphthalenivorans (strain CJ2)</name>
    <dbReference type="NCBI Taxonomy" id="365044"/>
    <lineage>
        <taxon>Bacteria</taxon>
        <taxon>Pseudomonadati</taxon>
        <taxon>Pseudomonadota</taxon>
        <taxon>Betaproteobacteria</taxon>
        <taxon>Burkholderiales</taxon>
        <taxon>Comamonadaceae</taxon>
        <taxon>Polaromonas</taxon>
    </lineage>
</organism>
<evidence type="ECO:0000255" key="1">
    <source>
        <dbReference type="HAMAP-Rule" id="MF_00303"/>
    </source>
</evidence>
<protein>
    <recommendedName>
        <fullName evidence="1">Trigger factor</fullName>
        <shortName evidence="1">TF</shortName>
        <ecNumber evidence="1">5.2.1.8</ecNumber>
    </recommendedName>
    <alternativeName>
        <fullName evidence="1">PPIase</fullName>
    </alternativeName>
</protein>